<evidence type="ECO:0000255" key="1">
    <source>
        <dbReference type="HAMAP-Rule" id="MF_00121"/>
    </source>
</evidence>
<reference key="1">
    <citation type="submission" date="2007-05" db="EMBL/GenBank/DDBJ databases">
        <title>Complete sequence of chromosome of Staphylococcus aureus subsp. aureus JH9.</title>
        <authorList>
            <consortium name="US DOE Joint Genome Institute"/>
            <person name="Copeland A."/>
            <person name="Lucas S."/>
            <person name="Lapidus A."/>
            <person name="Barry K."/>
            <person name="Detter J.C."/>
            <person name="Glavina del Rio T."/>
            <person name="Hammon N."/>
            <person name="Israni S."/>
            <person name="Pitluck S."/>
            <person name="Chain P."/>
            <person name="Malfatti S."/>
            <person name="Shin M."/>
            <person name="Vergez L."/>
            <person name="Schmutz J."/>
            <person name="Larimer F."/>
            <person name="Land M."/>
            <person name="Hauser L."/>
            <person name="Kyrpides N."/>
            <person name="Kim E."/>
            <person name="Tomasz A."/>
            <person name="Richardson P."/>
        </authorList>
    </citation>
    <scope>NUCLEOTIDE SEQUENCE [LARGE SCALE GENOMIC DNA]</scope>
    <source>
        <strain>JH9</strain>
    </source>
</reference>
<sequence>MHFETVIGLEVHVELKTDSKMFSPSPAHFGAEPNSNTNVIDLAYPGVLPVVNKRAVDWAMRAAMALNMEIATESKFDRKNYFYPDNPKAYQISQFDQPIGENGYIDIEVDGETKRIGITRLHMEEDAGKSTHKGEYSLVDLNRQGTPLIEIVSEPDIRSPKEAYAYLEKLRSIIQYTGVSDVKMEEGSLRCDANISLRPYGQEKFGTKAELKNLNSFNYVRKGLEYEEKRQEEELLNGGEIGQETRRFDESTGKTILMRVKEGSDDYRYFPEPDIVPLYIDDAWKERVRQTIPELPDERKAKYVNELGLPAYDAHVLTLTKEMSDFFESTIEHGADVKLTSNWLMGGVNEYLNKNQVELLDTKLTPENLAGMIKLIEDGTMSSKIAKKVFPELAAKGGNAKQIMEDNGLVQISDEATLLKFVNEALDNNEQSVEDYKNGKGKAMGFLVGQIMKASKGQANPQLVNQLLKQELDKR</sequence>
<name>GATB_STAA9</name>
<proteinExistence type="inferred from homology"/>
<keyword id="KW-0067">ATP-binding</keyword>
<keyword id="KW-0436">Ligase</keyword>
<keyword id="KW-0547">Nucleotide-binding</keyword>
<keyword id="KW-0648">Protein biosynthesis</keyword>
<feature type="chain" id="PRO_1000076170" description="Aspartyl/glutamyl-tRNA(Asn/Gln) amidotransferase subunit B">
    <location>
        <begin position="1"/>
        <end position="475"/>
    </location>
</feature>
<protein>
    <recommendedName>
        <fullName evidence="1">Aspartyl/glutamyl-tRNA(Asn/Gln) amidotransferase subunit B</fullName>
        <shortName evidence="1">Asp/Glu-ADT subunit B</shortName>
        <ecNumber evidence="1">6.3.5.-</ecNumber>
    </recommendedName>
</protein>
<organism>
    <name type="scientific">Staphylococcus aureus (strain JH9)</name>
    <dbReference type="NCBI Taxonomy" id="359786"/>
    <lineage>
        <taxon>Bacteria</taxon>
        <taxon>Bacillati</taxon>
        <taxon>Bacillota</taxon>
        <taxon>Bacilli</taxon>
        <taxon>Bacillales</taxon>
        <taxon>Staphylococcaceae</taxon>
        <taxon>Staphylococcus</taxon>
    </lineage>
</organism>
<accession>A5IU66</accession>
<gene>
    <name evidence="1" type="primary">gatB</name>
    <name type="ordered locus">SaurJH9_1954</name>
</gene>
<comment type="function">
    <text evidence="1">Allows the formation of correctly charged Asn-tRNA(Asn) or Gln-tRNA(Gln) through the transamidation of misacylated Asp-tRNA(Asn) or Glu-tRNA(Gln) in organisms which lack either or both of asparaginyl-tRNA or glutaminyl-tRNA synthetases. The reaction takes place in the presence of glutamine and ATP through an activated phospho-Asp-tRNA(Asn) or phospho-Glu-tRNA(Gln).</text>
</comment>
<comment type="catalytic activity">
    <reaction evidence="1">
        <text>L-glutamyl-tRNA(Gln) + L-glutamine + ATP + H2O = L-glutaminyl-tRNA(Gln) + L-glutamate + ADP + phosphate + H(+)</text>
        <dbReference type="Rhea" id="RHEA:17521"/>
        <dbReference type="Rhea" id="RHEA-COMP:9681"/>
        <dbReference type="Rhea" id="RHEA-COMP:9684"/>
        <dbReference type="ChEBI" id="CHEBI:15377"/>
        <dbReference type="ChEBI" id="CHEBI:15378"/>
        <dbReference type="ChEBI" id="CHEBI:29985"/>
        <dbReference type="ChEBI" id="CHEBI:30616"/>
        <dbReference type="ChEBI" id="CHEBI:43474"/>
        <dbReference type="ChEBI" id="CHEBI:58359"/>
        <dbReference type="ChEBI" id="CHEBI:78520"/>
        <dbReference type="ChEBI" id="CHEBI:78521"/>
        <dbReference type="ChEBI" id="CHEBI:456216"/>
    </reaction>
</comment>
<comment type="catalytic activity">
    <reaction evidence="1">
        <text>L-aspartyl-tRNA(Asn) + L-glutamine + ATP + H2O = L-asparaginyl-tRNA(Asn) + L-glutamate + ADP + phosphate + 2 H(+)</text>
        <dbReference type="Rhea" id="RHEA:14513"/>
        <dbReference type="Rhea" id="RHEA-COMP:9674"/>
        <dbReference type="Rhea" id="RHEA-COMP:9677"/>
        <dbReference type="ChEBI" id="CHEBI:15377"/>
        <dbReference type="ChEBI" id="CHEBI:15378"/>
        <dbReference type="ChEBI" id="CHEBI:29985"/>
        <dbReference type="ChEBI" id="CHEBI:30616"/>
        <dbReference type="ChEBI" id="CHEBI:43474"/>
        <dbReference type="ChEBI" id="CHEBI:58359"/>
        <dbReference type="ChEBI" id="CHEBI:78515"/>
        <dbReference type="ChEBI" id="CHEBI:78516"/>
        <dbReference type="ChEBI" id="CHEBI:456216"/>
    </reaction>
</comment>
<comment type="subunit">
    <text evidence="1">Heterotrimer of A, B and C subunits.</text>
</comment>
<comment type="similarity">
    <text evidence="1">Belongs to the GatB/GatE family. GatB subfamily.</text>
</comment>
<dbReference type="EC" id="6.3.5.-" evidence="1"/>
<dbReference type="EMBL" id="CP000703">
    <property type="protein sequence ID" value="ABQ49739.1"/>
    <property type="molecule type" value="Genomic_DNA"/>
</dbReference>
<dbReference type="RefSeq" id="WP_000545370.1">
    <property type="nucleotide sequence ID" value="NC_009487.1"/>
</dbReference>
<dbReference type="SMR" id="A5IU66"/>
<dbReference type="KEGG" id="saj:SaurJH9_1954"/>
<dbReference type="HOGENOM" id="CLU_019240_0_0_9"/>
<dbReference type="GO" id="GO:0050566">
    <property type="term" value="F:asparaginyl-tRNA synthase (glutamine-hydrolyzing) activity"/>
    <property type="evidence" value="ECO:0007669"/>
    <property type="project" value="RHEA"/>
</dbReference>
<dbReference type="GO" id="GO:0005524">
    <property type="term" value="F:ATP binding"/>
    <property type="evidence" value="ECO:0007669"/>
    <property type="project" value="UniProtKB-KW"/>
</dbReference>
<dbReference type="GO" id="GO:0050567">
    <property type="term" value="F:glutaminyl-tRNA synthase (glutamine-hydrolyzing) activity"/>
    <property type="evidence" value="ECO:0007669"/>
    <property type="project" value="UniProtKB-UniRule"/>
</dbReference>
<dbReference type="GO" id="GO:0070681">
    <property type="term" value="P:glutaminyl-tRNAGln biosynthesis via transamidation"/>
    <property type="evidence" value="ECO:0007669"/>
    <property type="project" value="TreeGrafter"/>
</dbReference>
<dbReference type="GO" id="GO:0006412">
    <property type="term" value="P:translation"/>
    <property type="evidence" value="ECO:0007669"/>
    <property type="project" value="UniProtKB-UniRule"/>
</dbReference>
<dbReference type="FunFam" id="1.10.10.410:FF:000001">
    <property type="entry name" value="Aspartyl/glutamyl-tRNA(Asn/Gln) amidotransferase subunit B"/>
    <property type="match status" value="1"/>
</dbReference>
<dbReference type="FunFam" id="1.10.150.380:FF:000001">
    <property type="entry name" value="Aspartyl/glutamyl-tRNA(Asn/Gln) amidotransferase subunit B"/>
    <property type="match status" value="1"/>
</dbReference>
<dbReference type="Gene3D" id="1.10.10.410">
    <property type="match status" value="1"/>
</dbReference>
<dbReference type="Gene3D" id="1.10.150.380">
    <property type="entry name" value="GatB domain, N-terminal subdomain"/>
    <property type="match status" value="1"/>
</dbReference>
<dbReference type="HAMAP" id="MF_00121">
    <property type="entry name" value="GatB"/>
    <property type="match status" value="1"/>
</dbReference>
<dbReference type="InterPro" id="IPR017959">
    <property type="entry name" value="Asn/Gln-tRNA_amidoTrfase_suB/E"/>
</dbReference>
<dbReference type="InterPro" id="IPR006075">
    <property type="entry name" value="Asn/Gln-tRNA_Trfase_suB/E_cat"/>
</dbReference>
<dbReference type="InterPro" id="IPR018027">
    <property type="entry name" value="Asn/Gln_amidotransferase"/>
</dbReference>
<dbReference type="InterPro" id="IPR003789">
    <property type="entry name" value="Asn/Gln_tRNA_amidoTrase-B-like"/>
</dbReference>
<dbReference type="InterPro" id="IPR004413">
    <property type="entry name" value="GatB"/>
</dbReference>
<dbReference type="InterPro" id="IPR042114">
    <property type="entry name" value="GatB_C_1"/>
</dbReference>
<dbReference type="InterPro" id="IPR023168">
    <property type="entry name" value="GatB_Yqey_C_2"/>
</dbReference>
<dbReference type="InterPro" id="IPR017958">
    <property type="entry name" value="Gln-tRNA_amidoTrfase_suB_CS"/>
</dbReference>
<dbReference type="InterPro" id="IPR014746">
    <property type="entry name" value="Gln_synth/guanido_kin_cat_dom"/>
</dbReference>
<dbReference type="NCBIfam" id="TIGR00133">
    <property type="entry name" value="gatB"/>
    <property type="match status" value="1"/>
</dbReference>
<dbReference type="NCBIfam" id="NF004011">
    <property type="entry name" value="PRK05477.1-1"/>
    <property type="match status" value="1"/>
</dbReference>
<dbReference type="NCBIfam" id="NF004012">
    <property type="entry name" value="PRK05477.1-2"/>
    <property type="match status" value="1"/>
</dbReference>
<dbReference type="NCBIfam" id="NF004014">
    <property type="entry name" value="PRK05477.1-4"/>
    <property type="match status" value="1"/>
</dbReference>
<dbReference type="PANTHER" id="PTHR11659">
    <property type="entry name" value="GLUTAMYL-TRNA GLN AMIDOTRANSFERASE SUBUNIT B MITOCHONDRIAL AND PROKARYOTIC PET112-RELATED"/>
    <property type="match status" value="1"/>
</dbReference>
<dbReference type="PANTHER" id="PTHR11659:SF0">
    <property type="entry name" value="GLUTAMYL-TRNA(GLN) AMIDOTRANSFERASE SUBUNIT B, MITOCHONDRIAL"/>
    <property type="match status" value="1"/>
</dbReference>
<dbReference type="Pfam" id="PF02934">
    <property type="entry name" value="GatB_N"/>
    <property type="match status" value="1"/>
</dbReference>
<dbReference type="Pfam" id="PF02637">
    <property type="entry name" value="GatB_Yqey"/>
    <property type="match status" value="1"/>
</dbReference>
<dbReference type="SMART" id="SM00845">
    <property type="entry name" value="GatB_Yqey"/>
    <property type="match status" value="1"/>
</dbReference>
<dbReference type="SUPFAM" id="SSF89095">
    <property type="entry name" value="GatB/YqeY motif"/>
    <property type="match status" value="1"/>
</dbReference>
<dbReference type="SUPFAM" id="SSF55931">
    <property type="entry name" value="Glutamine synthetase/guanido kinase"/>
    <property type="match status" value="1"/>
</dbReference>
<dbReference type="PROSITE" id="PS01234">
    <property type="entry name" value="GATB"/>
    <property type="match status" value="1"/>
</dbReference>